<geneLocation type="plasmid">
    <name>pTF-FC2</name>
</geneLocation>
<organism>
    <name type="scientific">Acidithiobacillus ferrooxidans</name>
    <name type="common">Thiobacillus ferrooxidans</name>
    <dbReference type="NCBI Taxonomy" id="920"/>
    <lineage>
        <taxon>Bacteria</taxon>
        <taxon>Pseudomonadati</taxon>
        <taxon>Pseudomonadota</taxon>
        <taxon>Acidithiobacillia</taxon>
        <taxon>Acidithiobacillales</taxon>
        <taxon>Acidithiobacillaceae</taxon>
        <taxon>Acidithiobacillus</taxon>
    </lineage>
</organism>
<dbReference type="EMBL" id="M57717">
    <property type="protein sequence ID" value="AAA27389.1"/>
    <property type="molecule type" value="Genomic_DNA"/>
</dbReference>
<dbReference type="PIR" id="A43256">
    <property type="entry name" value="A43256"/>
</dbReference>
<dbReference type="InterPro" id="IPR005094">
    <property type="entry name" value="Endonuclease_MobA/VirD2"/>
</dbReference>
<dbReference type="InterPro" id="IPR049751">
    <property type="entry name" value="TraI/MobA_relaxases"/>
</dbReference>
<dbReference type="InterPro" id="IPR054462">
    <property type="entry name" value="TraI_M"/>
</dbReference>
<dbReference type="NCBIfam" id="NF041893">
    <property type="entry name" value="TraI_MobP_relax"/>
    <property type="match status" value="1"/>
</dbReference>
<dbReference type="Pfam" id="PF03432">
    <property type="entry name" value="Relaxase"/>
    <property type="match status" value="1"/>
</dbReference>
<dbReference type="Pfam" id="PF22863">
    <property type="entry name" value="TraI_middle"/>
    <property type="match status" value="1"/>
</dbReference>
<name>MOBA_ACIFR</name>
<sequence length="409" mass="46836">MIALSQEAVRSKDTINHYVLSWREGEQPSPEQVEEAVSIFMDELGVKDHQAIYGLHADTDNLHLHLAINRVHPETLKVVKINNGFDIEAAHKAIARIENAQGWQREQNGRYQVLENGELGREHIDKDKPRQPAQPKRDMENRTGEKSAERIAIEDGAPIIKKAQTWEQLHRELAAKGMRYEKTGSGATLFVGDVGVKASSADRDASLSKLQKRLGAYQPPQRQQVAQREPEPIKPDVPGWKDYITGRKAHYSEKNADKLVQDKRQEQERKQLAEQQKARRDELMRGNWKGKGEVLNAMRSVIAAEQAAEKAALKEKHQKQREQHRQQFRPYPDLEQWQRMQKSPELAEQWRHRASEPQRIEGDRSEPPTPRDIRAYQPEIVGQQVHYSRKEEGGRGGGVSFVDKGKSID</sequence>
<accession>P22898</accession>
<protein>
    <recommendedName>
        <fullName>Protein MobA</fullName>
    </recommendedName>
</protein>
<reference key="1">
    <citation type="journal article" date="1992" name="J. Bacteriol.">
        <title>Sequence analysis and characterization of the mobilization region of a broad-host-range plasmid, pTF-FC2, isolated from Thiobacillus ferrooxidans.</title>
        <authorList>
            <person name="Rohrer J."/>
            <person name="Rawlings D.E."/>
        </authorList>
    </citation>
    <scope>NUCLEOTIDE SEQUENCE [GENOMIC DNA]</scope>
</reference>
<proteinExistence type="predicted"/>
<keyword id="KW-0614">Plasmid</keyword>
<feature type="chain" id="PRO_0000068396" description="Protein MobA">
    <location>
        <begin position="1"/>
        <end position="409" status="greater than"/>
    </location>
</feature>
<feature type="region of interest" description="Disordered" evidence="1">
    <location>
        <begin position="117"/>
        <end position="149"/>
    </location>
</feature>
<feature type="region of interest" description="Disordered" evidence="1">
    <location>
        <begin position="215"/>
        <end position="239"/>
    </location>
</feature>
<feature type="region of interest" description="Disordered" evidence="1">
    <location>
        <begin position="262"/>
        <end position="285"/>
    </location>
</feature>
<feature type="region of interest" description="Disordered" evidence="1">
    <location>
        <begin position="309"/>
        <end position="409"/>
    </location>
</feature>
<feature type="compositionally biased region" description="Basic and acidic residues" evidence="1">
    <location>
        <begin position="118"/>
        <end position="149"/>
    </location>
</feature>
<feature type="compositionally biased region" description="Basic and acidic residues" evidence="1">
    <location>
        <begin position="262"/>
        <end position="284"/>
    </location>
</feature>
<feature type="compositionally biased region" description="Basic and acidic residues" evidence="1">
    <location>
        <begin position="309"/>
        <end position="325"/>
    </location>
</feature>
<feature type="compositionally biased region" description="Basic and acidic residues" evidence="1">
    <location>
        <begin position="348"/>
        <end position="374"/>
    </location>
</feature>
<feature type="non-terminal residue">
    <location>
        <position position="409"/>
    </location>
</feature>
<gene>
    <name type="primary">mobA</name>
</gene>
<evidence type="ECO:0000256" key="1">
    <source>
        <dbReference type="SAM" id="MobiDB-lite"/>
    </source>
</evidence>